<feature type="chain" id="PRO_0000143070" description="Anti-apoptotic protein NR13">
    <location>
        <begin position="1"/>
        <end position="177"/>
    </location>
</feature>
<feature type="transmembrane region" description="Helical" evidence="2">
    <location>
        <begin position="86"/>
        <end position="106"/>
    </location>
</feature>
<feature type="transmembrane region" description="Helical" evidence="2">
    <location>
        <begin position="156"/>
        <end position="176"/>
    </location>
</feature>
<feature type="short sequence motif" description="BH1" evidence="1">
    <location>
        <begin position="75"/>
        <end position="94"/>
    </location>
</feature>
<feature type="short sequence motif" description="BH2" evidence="1">
    <location>
        <begin position="126"/>
        <end position="141"/>
    </location>
</feature>
<reference key="1">
    <citation type="journal article" date="2002" name="Biochem. J.">
        <title>Evidence for crucial electrostatic interactions between Bcl-2 homology domains BH3 and BH4 in the anti-apoptotic Nr-13 protein.</title>
        <authorList>
            <person name="Lalle P."/>
            <person name="Aouacheria A."/>
            <person name="Dumont-Miscopein A."/>
            <person name="Jambon M."/>
            <person name="Venet S."/>
            <person name="Bobichon H."/>
            <person name="Colas P."/>
            <person name="Deleage G."/>
            <person name="Geourjon C."/>
            <person name="Gillet G."/>
        </authorList>
    </citation>
    <scope>NUCLEOTIDE SEQUENCE [MRNA]</scope>
</reference>
<reference key="2">
    <citation type="journal article" date="1999" name="Genes Dev.">
        <title>Role of Nr13 in regulation of programmed cell death in the bursa of Fabricius.</title>
        <authorList>
            <person name="Lee R.M."/>
            <person name="Gillet G."/>
            <person name="Burnside J."/>
            <person name="Thomas S.J."/>
            <person name="Neiman P."/>
        </authorList>
    </citation>
    <scope>FUNCTION</scope>
    <scope>INTERACTION WITH BAX</scope>
</reference>
<evidence type="ECO:0000250" key="1"/>
<evidence type="ECO:0000255" key="2"/>
<evidence type="ECO:0000269" key="3">
    <source>
    </source>
</evidence>
<evidence type="ECO:0000305" key="4"/>
<keyword id="KW-0053">Apoptosis</keyword>
<keyword id="KW-1003">Cell membrane</keyword>
<keyword id="KW-0472">Membrane</keyword>
<keyword id="KW-1185">Reference proteome</keyword>
<keyword id="KW-0812">Transmembrane</keyword>
<keyword id="KW-1133">Transmembrane helix</keyword>
<sequence length="177" mass="18778">MPGSLKEETALLLEDYFQHRAGGAALPPSATAAELRRAAAELERRERPFFRSCAPLARAEPREAAALLRKVAAQLEAEGGLNWGRLLALVVFTGTLAAALAESGCEEGPSRLAAALAAYLAEEQGEWLEEHGGWDGFCRFFGRHGSQPADQNSTLSNAIMAAAGFGIAGLAFLLVVR</sequence>
<dbReference type="EMBL" id="AF375661">
    <property type="protein sequence ID" value="AAK54806.1"/>
    <property type="molecule type" value="mRNA"/>
</dbReference>
<dbReference type="RefSeq" id="NP_989853.1">
    <property type="nucleotide sequence ID" value="NM_204522.1"/>
</dbReference>
<dbReference type="SMR" id="Q90ZN1"/>
<dbReference type="FunCoup" id="Q90ZN1">
    <property type="interactions" value="9"/>
</dbReference>
<dbReference type="STRING" id="9031.ENSGALP00000053183"/>
<dbReference type="Ensembl" id="ENSGALT00010050705.1">
    <property type="protein sequence ID" value="ENSGALP00010029941.1"/>
    <property type="gene ID" value="ENSGALG00010020978.1"/>
</dbReference>
<dbReference type="GeneID" id="395193"/>
<dbReference type="KEGG" id="gga:395193"/>
<dbReference type="CTD" id="10017"/>
<dbReference type="VEuPathDB" id="HostDB:geneid_395193"/>
<dbReference type="GeneTree" id="ENSGT01130000278292"/>
<dbReference type="InParanoid" id="Q90ZN1"/>
<dbReference type="OMA" id="TDYLEYC"/>
<dbReference type="OrthoDB" id="8856583at2759"/>
<dbReference type="PhylomeDB" id="Q90ZN1"/>
<dbReference type="PRO" id="PR:Q90ZN1"/>
<dbReference type="Proteomes" id="UP000000539">
    <property type="component" value="Chromosome 10"/>
</dbReference>
<dbReference type="Bgee" id="ENSGALG00000030871">
    <property type="expression patterns" value="Expressed in lung and 14 other cell types or tissues"/>
</dbReference>
<dbReference type="GO" id="GO:0005741">
    <property type="term" value="C:mitochondrial outer membrane"/>
    <property type="evidence" value="ECO:0000318"/>
    <property type="project" value="GO_Central"/>
</dbReference>
<dbReference type="GO" id="GO:0005886">
    <property type="term" value="C:plasma membrane"/>
    <property type="evidence" value="ECO:0007669"/>
    <property type="project" value="UniProtKB-SubCell"/>
</dbReference>
<dbReference type="GO" id="GO:0015267">
    <property type="term" value="F:channel activity"/>
    <property type="evidence" value="ECO:0000318"/>
    <property type="project" value="GO_Central"/>
</dbReference>
<dbReference type="GO" id="GO:0097192">
    <property type="term" value="P:extrinsic apoptotic signaling pathway in absence of ligand"/>
    <property type="evidence" value="ECO:0000318"/>
    <property type="project" value="GO_Central"/>
</dbReference>
<dbReference type="GO" id="GO:0008630">
    <property type="term" value="P:intrinsic apoptotic signaling pathway in response to DNA damage"/>
    <property type="evidence" value="ECO:0000318"/>
    <property type="project" value="GO_Central"/>
</dbReference>
<dbReference type="GO" id="GO:0043065">
    <property type="term" value="P:positive regulation of apoptotic process"/>
    <property type="evidence" value="ECO:0000318"/>
    <property type="project" value="GO_Central"/>
</dbReference>
<dbReference type="GO" id="GO:0001836">
    <property type="term" value="P:release of cytochrome c from mitochondria"/>
    <property type="evidence" value="ECO:0000318"/>
    <property type="project" value="GO_Central"/>
</dbReference>
<dbReference type="Gene3D" id="1.10.437.10">
    <property type="entry name" value="Blc2-like"/>
    <property type="match status" value="1"/>
</dbReference>
<dbReference type="InterPro" id="IPR036834">
    <property type="entry name" value="Bcl-2-like_sf"/>
</dbReference>
<dbReference type="InterPro" id="IPR046371">
    <property type="entry name" value="Bcl-2_BH1-3"/>
</dbReference>
<dbReference type="InterPro" id="IPR026298">
    <property type="entry name" value="Bcl-2_fam"/>
</dbReference>
<dbReference type="InterPro" id="IPR002475">
    <property type="entry name" value="Bcl2-like"/>
</dbReference>
<dbReference type="InterPro" id="IPR020726">
    <property type="entry name" value="Bcl2_BH2_motif_CS"/>
</dbReference>
<dbReference type="PANTHER" id="PTHR11256">
    <property type="entry name" value="BCL-2 RELATED"/>
    <property type="match status" value="1"/>
</dbReference>
<dbReference type="PANTHER" id="PTHR11256:SF47">
    <property type="entry name" value="BCL-2-LIKE PROTEIN 10"/>
    <property type="match status" value="1"/>
</dbReference>
<dbReference type="Pfam" id="PF00452">
    <property type="entry name" value="Bcl-2"/>
    <property type="match status" value="1"/>
</dbReference>
<dbReference type="PRINTS" id="PR01862">
    <property type="entry name" value="BCL2FAMILY"/>
</dbReference>
<dbReference type="SMART" id="SM00337">
    <property type="entry name" value="BCL"/>
    <property type="match status" value="1"/>
</dbReference>
<dbReference type="SUPFAM" id="SSF56854">
    <property type="entry name" value="Bcl-2 inhibitors of programmed cell death"/>
    <property type="match status" value="1"/>
</dbReference>
<dbReference type="PROSITE" id="PS50062">
    <property type="entry name" value="BCL2_FAMILY"/>
    <property type="match status" value="1"/>
</dbReference>
<dbReference type="PROSITE" id="PS01258">
    <property type="entry name" value="BH2"/>
    <property type="match status" value="1"/>
</dbReference>
<proteinExistence type="evidence at protein level"/>
<comment type="function">
    <text evidence="3">Shows anti-apoptotic properties. Counteract the pro-apoptotic activity of BAX.</text>
</comment>
<comment type="subunit">
    <text evidence="3">Interacts with BAX.</text>
</comment>
<comment type="subcellular location">
    <subcellularLocation>
        <location>Cell membrane</location>
        <topology>Multi-pass membrane protein</topology>
    </subcellularLocation>
</comment>
<comment type="tissue specificity">
    <text>Expressed preferentially in heart, skeletal muscle, retina, optical tectum and bursa of Fabricius.</text>
</comment>
<comment type="similarity">
    <text evidence="4">Belongs to the Bcl-2 family.</text>
</comment>
<name>NR13_CHICK</name>
<gene>
    <name type="primary">NR13</name>
</gene>
<protein>
    <recommendedName>
        <fullName>Anti-apoptotic protein NR13</fullName>
    </recommendedName>
    <alternativeName>
        <fullName>Apoptosis regulator Nr-13</fullName>
    </alternativeName>
</protein>
<accession>Q90ZN1</accession>
<organism>
    <name type="scientific">Gallus gallus</name>
    <name type="common">Chicken</name>
    <dbReference type="NCBI Taxonomy" id="9031"/>
    <lineage>
        <taxon>Eukaryota</taxon>
        <taxon>Metazoa</taxon>
        <taxon>Chordata</taxon>
        <taxon>Craniata</taxon>
        <taxon>Vertebrata</taxon>
        <taxon>Euteleostomi</taxon>
        <taxon>Archelosauria</taxon>
        <taxon>Archosauria</taxon>
        <taxon>Dinosauria</taxon>
        <taxon>Saurischia</taxon>
        <taxon>Theropoda</taxon>
        <taxon>Coelurosauria</taxon>
        <taxon>Aves</taxon>
        <taxon>Neognathae</taxon>
        <taxon>Galloanserae</taxon>
        <taxon>Galliformes</taxon>
        <taxon>Phasianidae</taxon>
        <taxon>Phasianinae</taxon>
        <taxon>Gallus</taxon>
    </lineage>
</organism>